<reference key="1">
    <citation type="submission" date="2003-06" db="EMBL/GenBank/DDBJ databases">
        <title>The complete genome sequence of Haemophilus ducreyi.</title>
        <authorList>
            <person name="Munson R.S. Jr."/>
            <person name="Ray W.C."/>
            <person name="Mahairas G."/>
            <person name="Sabo P."/>
            <person name="Mungur R."/>
            <person name="Johnson L."/>
            <person name="Nguyen D."/>
            <person name="Wang J."/>
            <person name="Forst C."/>
            <person name="Hood L."/>
        </authorList>
    </citation>
    <scope>NUCLEOTIDE SEQUENCE [LARGE SCALE GENOMIC DNA]</scope>
    <source>
        <strain>35000HP / ATCC 700724</strain>
    </source>
</reference>
<comment type="function">
    <text evidence="1">Involved in the synthesis of autoinducer 2 (AI-2) which is secreted by bacteria and is used to communicate both the cell density and the metabolic potential of the environment. The regulation of gene expression in response to changes in cell density is called quorum sensing. Catalyzes the transformation of S-ribosylhomocysteine (RHC) to homocysteine (HC) and 4,5-dihydroxy-2,3-pentadione (DPD).</text>
</comment>
<comment type="catalytic activity">
    <reaction evidence="1">
        <text>S-(5-deoxy-D-ribos-5-yl)-L-homocysteine = (S)-4,5-dihydroxypentane-2,3-dione + L-homocysteine</text>
        <dbReference type="Rhea" id="RHEA:17753"/>
        <dbReference type="ChEBI" id="CHEBI:29484"/>
        <dbReference type="ChEBI" id="CHEBI:58195"/>
        <dbReference type="ChEBI" id="CHEBI:58199"/>
        <dbReference type="EC" id="4.4.1.21"/>
    </reaction>
</comment>
<comment type="cofactor">
    <cofactor evidence="1">
        <name>Fe cation</name>
        <dbReference type="ChEBI" id="CHEBI:24875"/>
    </cofactor>
    <text evidence="1">Binds 1 Fe cation per subunit.</text>
</comment>
<comment type="subunit">
    <text evidence="1">Homodimer.</text>
</comment>
<comment type="similarity">
    <text evidence="1">Belongs to the LuxS family.</text>
</comment>
<feature type="chain" id="PRO_0000172226" description="S-ribosylhomocysteine lyase">
    <location>
        <begin position="1"/>
        <end position="169"/>
    </location>
</feature>
<feature type="binding site" evidence="1">
    <location>
        <position position="54"/>
    </location>
    <ligand>
        <name>Fe cation</name>
        <dbReference type="ChEBI" id="CHEBI:24875"/>
    </ligand>
</feature>
<feature type="binding site" evidence="1">
    <location>
        <position position="58"/>
    </location>
    <ligand>
        <name>Fe cation</name>
        <dbReference type="ChEBI" id="CHEBI:24875"/>
    </ligand>
</feature>
<feature type="binding site" evidence="1">
    <location>
        <position position="129"/>
    </location>
    <ligand>
        <name>Fe cation</name>
        <dbReference type="ChEBI" id="CHEBI:24875"/>
    </ligand>
</feature>
<dbReference type="EC" id="4.4.1.21" evidence="1"/>
<dbReference type="EMBL" id="AE017143">
    <property type="protein sequence ID" value="AAP95340.1"/>
    <property type="molecule type" value="Genomic_DNA"/>
</dbReference>
<dbReference type="RefSeq" id="WP_010944393.1">
    <property type="nucleotide sequence ID" value="NC_002940.2"/>
</dbReference>
<dbReference type="SMR" id="Q7VNV8"/>
<dbReference type="STRING" id="233412.HD_0370"/>
<dbReference type="KEGG" id="hdu:HD_0370"/>
<dbReference type="eggNOG" id="COG1854">
    <property type="taxonomic scope" value="Bacteria"/>
</dbReference>
<dbReference type="HOGENOM" id="CLU_107531_2_0_6"/>
<dbReference type="OrthoDB" id="9788129at2"/>
<dbReference type="Proteomes" id="UP000001022">
    <property type="component" value="Chromosome"/>
</dbReference>
<dbReference type="GO" id="GO:0005506">
    <property type="term" value="F:iron ion binding"/>
    <property type="evidence" value="ECO:0007669"/>
    <property type="project" value="InterPro"/>
</dbReference>
<dbReference type="GO" id="GO:0043768">
    <property type="term" value="F:S-ribosylhomocysteine lyase activity"/>
    <property type="evidence" value="ECO:0007669"/>
    <property type="project" value="UniProtKB-UniRule"/>
</dbReference>
<dbReference type="GO" id="GO:0009372">
    <property type="term" value="P:quorum sensing"/>
    <property type="evidence" value="ECO:0007669"/>
    <property type="project" value="UniProtKB-UniRule"/>
</dbReference>
<dbReference type="Gene3D" id="3.30.1360.80">
    <property type="entry name" value="S-ribosylhomocysteinase (LuxS)"/>
    <property type="match status" value="1"/>
</dbReference>
<dbReference type="HAMAP" id="MF_00091">
    <property type="entry name" value="LuxS"/>
    <property type="match status" value="1"/>
</dbReference>
<dbReference type="InterPro" id="IPR037005">
    <property type="entry name" value="LuxS_sf"/>
</dbReference>
<dbReference type="InterPro" id="IPR011249">
    <property type="entry name" value="Metalloenz_LuxS/M16"/>
</dbReference>
<dbReference type="InterPro" id="IPR003815">
    <property type="entry name" value="S-ribosylhomocysteinase"/>
</dbReference>
<dbReference type="NCBIfam" id="NF002602">
    <property type="entry name" value="PRK02260.1-2"/>
    <property type="match status" value="1"/>
</dbReference>
<dbReference type="PANTHER" id="PTHR35799">
    <property type="entry name" value="S-RIBOSYLHOMOCYSTEINE LYASE"/>
    <property type="match status" value="1"/>
</dbReference>
<dbReference type="PANTHER" id="PTHR35799:SF1">
    <property type="entry name" value="S-RIBOSYLHOMOCYSTEINE LYASE"/>
    <property type="match status" value="1"/>
</dbReference>
<dbReference type="Pfam" id="PF02664">
    <property type="entry name" value="LuxS"/>
    <property type="match status" value="1"/>
</dbReference>
<dbReference type="PIRSF" id="PIRSF006160">
    <property type="entry name" value="AI2"/>
    <property type="match status" value="1"/>
</dbReference>
<dbReference type="PRINTS" id="PR01487">
    <property type="entry name" value="LUXSPROTEIN"/>
</dbReference>
<dbReference type="SUPFAM" id="SSF63411">
    <property type="entry name" value="LuxS/MPP-like metallohydrolase"/>
    <property type="match status" value="1"/>
</dbReference>
<sequence>MPLLDSFKVDHTRMNAPAVRVAKTITTPKGDLITVFDLRFCRPNMEIMSSKGIHTLEHLYAGFMRDHLNSDKVEIIDISPMGCRTGFYMSLIGEPSAQAVANAWKNAMHDILTKVSDVTQIPELNIYQCGTFSEHSLEDAHQIARDVLAKGISVNLNEDLTLDEEWLNR</sequence>
<evidence type="ECO:0000255" key="1">
    <source>
        <dbReference type="HAMAP-Rule" id="MF_00091"/>
    </source>
</evidence>
<gene>
    <name evidence="1" type="primary">luxS</name>
    <name type="ordered locus">HD_0370</name>
</gene>
<protein>
    <recommendedName>
        <fullName evidence="1">S-ribosylhomocysteine lyase</fullName>
        <ecNumber evidence="1">4.4.1.21</ecNumber>
    </recommendedName>
    <alternativeName>
        <fullName evidence="1">AI-2 synthesis protein</fullName>
    </alternativeName>
    <alternativeName>
        <fullName evidence="1">Autoinducer-2 production protein LuxS</fullName>
    </alternativeName>
</protein>
<organism>
    <name type="scientific">Haemophilus ducreyi (strain 35000HP / ATCC 700724)</name>
    <dbReference type="NCBI Taxonomy" id="233412"/>
    <lineage>
        <taxon>Bacteria</taxon>
        <taxon>Pseudomonadati</taxon>
        <taxon>Pseudomonadota</taxon>
        <taxon>Gammaproteobacteria</taxon>
        <taxon>Pasteurellales</taxon>
        <taxon>Pasteurellaceae</taxon>
        <taxon>Haemophilus</taxon>
    </lineage>
</organism>
<name>LUXS_HAEDU</name>
<proteinExistence type="inferred from homology"/>
<accession>Q7VNV8</accession>
<keyword id="KW-0071">Autoinducer synthesis</keyword>
<keyword id="KW-0408">Iron</keyword>
<keyword id="KW-0456">Lyase</keyword>
<keyword id="KW-0479">Metal-binding</keyword>
<keyword id="KW-0673">Quorum sensing</keyword>
<keyword id="KW-1185">Reference proteome</keyword>